<proteinExistence type="evidence at protein level"/>
<organism>
    <name type="scientific">Homo sapiens</name>
    <name type="common">Human</name>
    <dbReference type="NCBI Taxonomy" id="9606"/>
    <lineage>
        <taxon>Eukaryota</taxon>
        <taxon>Metazoa</taxon>
        <taxon>Chordata</taxon>
        <taxon>Craniata</taxon>
        <taxon>Vertebrata</taxon>
        <taxon>Euteleostomi</taxon>
        <taxon>Mammalia</taxon>
        <taxon>Eutheria</taxon>
        <taxon>Euarchontoglires</taxon>
        <taxon>Primates</taxon>
        <taxon>Haplorrhini</taxon>
        <taxon>Catarrhini</taxon>
        <taxon>Hominidae</taxon>
        <taxon>Homo</taxon>
    </lineage>
</organism>
<keyword id="KW-0007">Acetylation</keyword>
<keyword id="KW-0025">Alternative splicing</keyword>
<keyword id="KW-1017">Isopeptide bond</keyword>
<keyword id="KW-0488">Methylation</keyword>
<keyword id="KW-0509">mRNA transport</keyword>
<keyword id="KW-0539">Nucleus</keyword>
<keyword id="KW-0597">Phosphoprotein</keyword>
<keyword id="KW-1267">Proteomics identification</keyword>
<keyword id="KW-1185">Reference proteome</keyword>
<keyword id="KW-0694">RNA-binding</keyword>
<keyword id="KW-0804">Transcription</keyword>
<keyword id="KW-0805">Transcription regulation</keyword>
<keyword id="KW-0813">Transport</keyword>
<keyword id="KW-0832">Ubl conjugation</keyword>
<evidence type="ECO:0000250" key="1"/>
<evidence type="ECO:0000250" key="2">
    <source>
        <dbReference type="UniProtKB" id="Q9CY57"/>
    </source>
</evidence>
<evidence type="ECO:0000256" key="3">
    <source>
        <dbReference type="SAM" id="MobiDB-lite"/>
    </source>
</evidence>
<evidence type="ECO:0000269" key="4">
    <source>
    </source>
</evidence>
<evidence type="ECO:0000269" key="5">
    <source>
    </source>
</evidence>
<evidence type="ECO:0000269" key="6">
    <source>
    </source>
</evidence>
<evidence type="ECO:0000269" key="7">
    <source>
    </source>
</evidence>
<evidence type="ECO:0000269" key="8">
    <source>
    </source>
</evidence>
<evidence type="ECO:0000269" key="9">
    <source>
    </source>
</evidence>
<evidence type="ECO:0000303" key="10">
    <source>
    </source>
</evidence>
<evidence type="ECO:0000305" key="11"/>
<evidence type="ECO:0007744" key="12">
    <source>
    </source>
</evidence>
<evidence type="ECO:0007744" key="13">
    <source>
    </source>
</evidence>
<evidence type="ECO:0007744" key="14">
    <source>
    </source>
</evidence>
<evidence type="ECO:0007744" key="15">
    <source>
    </source>
</evidence>
<evidence type="ECO:0007744" key="16">
    <source>
    </source>
</evidence>
<name>CHTOP_HUMAN</name>
<protein>
    <recommendedName>
        <fullName>Chromatin target of PRMT1 protein</fullName>
    </recommendedName>
    <alternativeName>
        <fullName>Friend of PRMT1 protein</fullName>
    </alternativeName>
    <alternativeName>
        <fullName>Small arginine- and glycine-rich protein</fullName>
        <shortName>SRAG</shortName>
    </alternativeName>
</protein>
<sequence>MAAQSAPKVVLKSTTKMSLNERFTNMLKNKQPTPVNIRASMQQQQQLASARNRRLAQQMENRPSVQAALKLKQSLKQRLGKSNIQARLGRPIGALARGAIGGRGLPIIQRGLPRGGLRGGRATRTLLRGGMSLRGQNLLRGGRAVAPRMGLRRGGVRGRGGPGRGGLGRGAMGRGGIGGRGRGMIGRGRGGFGGRGRGRGRGRGALARPVLTKEQLDNQLDAYMSKTKGHLDAELDAYMAQTDPETND</sequence>
<feature type="initiator methionine" description="Removed" evidence="14">
    <location>
        <position position="1"/>
    </location>
</feature>
<feature type="chain" id="PRO_0000089263" description="Chromatin target of PRMT1 protein">
    <location>
        <begin position="2"/>
        <end position="248"/>
    </location>
</feature>
<feature type="region of interest" description="Disordered" evidence="3">
    <location>
        <begin position="151"/>
        <end position="204"/>
    </location>
</feature>
<feature type="region of interest" description="Interaction with PRMT1" evidence="1">
    <location>
        <begin position="153"/>
        <end position="206"/>
    </location>
</feature>
<feature type="short sequence motif" description="GAR motif; involved in 5hmC binding" evidence="9">
    <location>
        <begin position="194"/>
        <end position="203"/>
    </location>
</feature>
<feature type="compositionally biased region" description="Gly residues" evidence="3">
    <location>
        <begin position="157"/>
        <end position="195"/>
    </location>
</feature>
<feature type="modified residue" description="N-acetylalanine" evidence="14">
    <location>
        <position position="2"/>
    </location>
</feature>
<feature type="modified residue" description="Phosphothreonine" evidence="13 15">
    <location>
        <position position="33"/>
    </location>
</feature>
<feature type="modified residue" description="Phosphoserine" evidence="15">
    <location>
        <position position="40"/>
    </location>
</feature>
<feature type="modified residue" description="Phosphoserine" evidence="15">
    <location>
        <position position="49"/>
    </location>
</feature>
<feature type="modified residue" description="Phosphoserine" evidence="15">
    <location>
        <position position="64"/>
    </location>
</feature>
<feature type="modified residue" description="Phosphothreonine" evidence="12 13">
    <location>
        <position position="242"/>
    </location>
</feature>
<feature type="cross-link" description="Glycyl lysine isopeptide (Lys-Gly) (interchain with G-Cter in SUMO2)" evidence="16">
    <location>
        <position position="70"/>
    </location>
</feature>
<feature type="splice variant" id="VSP_017277" description="In isoform 2." evidence="10">
    <original>Q</original>
    <variation>QK</variation>
    <location>
        <position position="73"/>
    </location>
</feature>
<feature type="splice variant" id="VSP_040496" description="In isoform 3." evidence="11">
    <location>
        <begin position="134"/>
        <end position="179"/>
    </location>
</feature>
<feature type="mutagenesis site" description="Loss of 5hmc binding; when associated with A-197; A-199; A-201 and A-203." evidence="9">
    <original>R</original>
    <variation>A</variation>
    <location>
        <position position="195"/>
    </location>
</feature>
<feature type="mutagenesis site" description="Loss of 5hmc binding; when associated with A-195; A-199; A-201 and A-203." evidence="9">
    <original>R</original>
    <variation>A</variation>
    <location>
        <position position="197"/>
    </location>
</feature>
<feature type="mutagenesis site" description="Loss of 5hmc binding; when associated with A-195; A-197; A-201 and A-203." evidence="9">
    <original>R</original>
    <variation>A</variation>
    <location>
        <position position="199"/>
    </location>
</feature>
<feature type="mutagenesis site" description="Loss of 5hmc binding; when associated with A-195; A-197; A-199 and A-203." evidence="9">
    <original>R</original>
    <variation>A</variation>
    <location>
        <position position="201"/>
    </location>
</feature>
<feature type="mutagenesis site" description="Loss of 5hmc binding; when associated with A-195; A-197; A-199 and A-201." evidence="9">
    <original>R</original>
    <variation>A</variation>
    <location>
        <position position="203"/>
    </location>
</feature>
<feature type="sequence conflict" description="In Ref. 5; AAH59949." evidence="11" ref="5">
    <original>K</original>
    <variation>N</variation>
    <location>
        <position position="72"/>
    </location>
</feature>
<feature type="sequence conflict" description="In Ref. 6; CAB43362." evidence="11" ref="6">
    <original>R</original>
    <variation>P</variation>
    <location>
        <position position="180"/>
    </location>
</feature>
<feature type="sequence conflict" description="In Ref. 6; CAB43362." evidence="11" ref="6">
    <original>Y</original>
    <variation>H</variation>
    <location>
        <position position="238"/>
    </location>
</feature>
<gene>
    <name type="primary">CHTOP</name>
    <name type="synonym">C1orf77</name>
    <name type="synonym">FOP</name>
    <name type="ORF">HT031</name>
    <name type="ORF">PP7704</name>
</gene>
<dbReference type="EMBL" id="AF261137">
    <property type="protein sequence ID" value="AAG44673.1"/>
    <property type="molecule type" value="mRNA"/>
</dbReference>
<dbReference type="EMBL" id="AF318362">
    <property type="protein sequence ID" value="AAL55869.1"/>
    <property type="status" value="ALT_FRAME"/>
    <property type="molecule type" value="mRNA"/>
</dbReference>
<dbReference type="EMBL" id="AL162258">
    <property type="status" value="NOT_ANNOTATED_CDS"/>
    <property type="molecule type" value="Genomic_DNA"/>
</dbReference>
<dbReference type="EMBL" id="CH471121">
    <property type="protein sequence ID" value="EAW53290.1"/>
    <property type="molecule type" value="Genomic_DNA"/>
</dbReference>
<dbReference type="EMBL" id="CH471121">
    <property type="protein sequence ID" value="EAW53295.1"/>
    <property type="molecule type" value="Genomic_DNA"/>
</dbReference>
<dbReference type="EMBL" id="BC002733">
    <property type="protein sequence ID" value="AAH02733.1"/>
    <property type="status" value="ALT_INIT"/>
    <property type="molecule type" value="mRNA"/>
</dbReference>
<dbReference type="EMBL" id="BC059949">
    <property type="protein sequence ID" value="AAH59949.1"/>
    <property type="molecule type" value="mRNA"/>
</dbReference>
<dbReference type="EMBL" id="BC070027">
    <property type="protein sequence ID" value="AAH70027.1"/>
    <property type="status" value="ALT_INIT"/>
    <property type="molecule type" value="mRNA"/>
</dbReference>
<dbReference type="EMBL" id="BC108721">
    <property type="protein sequence ID" value="AAI08722.1"/>
    <property type="molecule type" value="mRNA"/>
</dbReference>
<dbReference type="EMBL" id="BC120961">
    <property type="protein sequence ID" value="AAI20962.1"/>
    <property type="molecule type" value="mRNA"/>
</dbReference>
<dbReference type="EMBL" id="BC120962">
    <property type="protein sequence ID" value="AAI20963.1"/>
    <property type="molecule type" value="mRNA"/>
</dbReference>
<dbReference type="EMBL" id="AL050260">
    <property type="protein sequence ID" value="CAB43362.2"/>
    <property type="molecule type" value="mRNA"/>
</dbReference>
<dbReference type="EMBL" id="AL512704">
    <property type="protein sequence ID" value="CAC21650.2"/>
    <property type="molecule type" value="mRNA"/>
</dbReference>
<dbReference type="CCDS" id="CCDS1048.1">
    <molecule id="Q9Y3Y2-1"/>
</dbReference>
<dbReference type="CCDS" id="CCDS72917.1">
    <molecule id="Q9Y3Y2-3"/>
</dbReference>
<dbReference type="CCDS" id="CCDS81380.1">
    <molecule id="Q9Y3Y2-4"/>
</dbReference>
<dbReference type="PIR" id="T08660">
    <property type="entry name" value="T08660"/>
</dbReference>
<dbReference type="RefSeq" id="NP_001193541.1">
    <molecule id="Q9Y3Y2-3"/>
    <property type="nucleotide sequence ID" value="NM_001206612.2"/>
</dbReference>
<dbReference type="RefSeq" id="NP_001231593.1">
    <property type="nucleotide sequence ID" value="NM_001244664.1"/>
</dbReference>
<dbReference type="RefSeq" id="NP_001304006.1">
    <molecule id="Q9Y3Y2-4"/>
    <property type="nucleotide sequence ID" value="NM_001317077.2"/>
</dbReference>
<dbReference type="RefSeq" id="NP_056422.2">
    <molecule id="Q9Y3Y2-1"/>
    <property type="nucleotide sequence ID" value="NM_015607.3"/>
</dbReference>
<dbReference type="SMR" id="Q9Y3Y2"/>
<dbReference type="BioGRID" id="117547">
    <property type="interactions" value="248"/>
</dbReference>
<dbReference type="ComplexPortal" id="CPX-2488">
    <property type="entry name" value="TREX transcription-export complex, DX39B variant"/>
</dbReference>
<dbReference type="ComplexPortal" id="CPX-7261">
    <property type="entry name" value="TREX transcription-export complex, DX39A variant"/>
</dbReference>
<dbReference type="CORUM" id="Q9Y3Y2"/>
<dbReference type="FunCoup" id="Q9Y3Y2">
    <property type="interactions" value="4071"/>
</dbReference>
<dbReference type="IntAct" id="Q9Y3Y2">
    <property type="interactions" value="144"/>
</dbReference>
<dbReference type="MINT" id="Q9Y3Y2"/>
<dbReference type="STRING" id="9606.ENSP00000357679"/>
<dbReference type="GlyGen" id="Q9Y3Y2">
    <property type="glycosylation" value="2 sites, 1 O-linked glycan (2 sites)"/>
</dbReference>
<dbReference type="iPTMnet" id="Q9Y3Y2"/>
<dbReference type="MetOSite" id="Q9Y3Y2"/>
<dbReference type="PhosphoSitePlus" id="Q9Y3Y2"/>
<dbReference type="BioMuta" id="CHTOP"/>
<dbReference type="jPOST" id="Q9Y3Y2"/>
<dbReference type="MassIVE" id="Q9Y3Y2"/>
<dbReference type="PaxDb" id="9606-ENSP00000357679"/>
<dbReference type="PeptideAtlas" id="Q9Y3Y2"/>
<dbReference type="ProteomicsDB" id="86084">
    <molecule id="Q9Y3Y2-1"/>
</dbReference>
<dbReference type="ProteomicsDB" id="86085">
    <molecule id="Q9Y3Y2-3"/>
</dbReference>
<dbReference type="ProteomicsDB" id="86086">
    <molecule id="Q9Y3Y2-4"/>
</dbReference>
<dbReference type="Pumba" id="Q9Y3Y2"/>
<dbReference type="Antibodypedia" id="34133">
    <property type="antibodies" value="149 antibodies from 26 providers"/>
</dbReference>
<dbReference type="DNASU" id="26097"/>
<dbReference type="Ensembl" id="ENST00000368690.7">
    <molecule id="Q9Y3Y2-3"/>
    <property type="protein sequence ID" value="ENSP00000357679.4"/>
    <property type="gene ID" value="ENSG00000160679.14"/>
</dbReference>
<dbReference type="Ensembl" id="ENST00000368694.8">
    <molecule id="Q9Y3Y2-1"/>
    <property type="protein sequence ID" value="ENSP00000357683.3"/>
    <property type="gene ID" value="ENSG00000160679.14"/>
</dbReference>
<dbReference type="Ensembl" id="ENST00000403433.5">
    <molecule id="Q9Y3Y2-4"/>
    <property type="protein sequence ID" value="ENSP00000385228.1"/>
    <property type="gene ID" value="ENSG00000160679.14"/>
</dbReference>
<dbReference type="GeneID" id="26097"/>
<dbReference type="KEGG" id="hsa:26097"/>
<dbReference type="MANE-Select" id="ENST00000368694.8">
    <property type="protein sequence ID" value="ENSP00000357683.3"/>
    <property type="RefSeq nucleotide sequence ID" value="NM_015607.4"/>
    <property type="RefSeq protein sequence ID" value="NP_056422.2"/>
</dbReference>
<dbReference type="UCSC" id="uc001fcm.3">
    <molecule id="Q9Y3Y2-1"/>
    <property type="organism name" value="human"/>
</dbReference>
<dbReference type="AGR" id="HGNC:24511"/>
<dbReference type="CTD" id="26097"/>
<dbReference type="DisGeNET" id="26097"/>
<dbReference type="GeneCards" id="CHTOP"/>
<dbReference type="HGNC" id="HGNC:24511">
    <property type="gene designation" value="CHTOP"/>
</dbReference>
<dbReference type="HPA" id="ENSG00000160679">
    <property type="expression patterns" value="Low tissue specificity"/>
</dbReference>
<dbReference type="MIM" id="614206">
    <property type="type" value="gene"/>
</dbReference>
<dbReference type="neXtProt" id="NX_Q9Y3Y2"/>
<dbReference type="OpenTargets" id="ENSG00000160679"/>
<dbReference type="PharmGKB" id="PA142672526"/>
<dbReference type="VEuPathDB" id="HostDB:ENSG00000160679"/>
<dbReference type="eggNOG" id="ENOG502QV0X">
    <property type="taxonomic scope" value="Eukaryota"/>
</dbReference>
<dbReference type="GeneTree" id="ENSGT00390000002869"/>
<dbReference type="HOGENOM" id="CLU_087638_0_0_1"/>
<dbReference type="InParanoid" id="Q9Y3Y2"/>
<dbReference type="OMA" id="KIQMQRQ"/>
<dbReference type="OrthoDB" id="446014at2759"/>
<dbReference type="PAN-GO" id="Q9Y3Y2">
    <property type="GO annotations" value="4 GO annotations based on evolutionary models"/>
</dbReference>
<dbReference type="PhylomeDB" id="Q9Y3Y2"/>
<dbReference type="TreeFam" id="TF331447"/>
<dbReference type="PathwayCommons" id="Q9Y3Y2"/>
<dbReference type="Reactome" id="R-HSA-159236">
    <property type="pathway name" value="Transport of Mature mRNA derived from an Intron-Containing Transcript"/>
</dbReference>
<dbReference type="Reactome" id="R-HSA-72187">
    <property type="pathway name" value="mRNA 3'-end processing"/>
</dbReference>
<dbReference type="Reactome" id="R-HSA-73856">
    <property type="pathway name" value="RNA Polymerase II Transcription Termination"/>
</dbReference>
<dbReference type="SignaLink" id="Q9Y3Y2"/>
<dbReference type="BioGRID-ORCS" id="26097">
    <property type="hits" value="153 hits in 1167 CRISPR screens"/>
</dbReference>
<dbReference type="CD-CODE" id="804901D1">
    <property type="entry name" value="Nuclear speckle"/>
</dbReference>
<dbReference type="CD-CODE" id="91857CE7">
    <property type="entry name" value="Nucleolus"/>
</dbReference>
<dbReference type="ChiTaRS" id="CHTOP">
    <property type="organism name" value="human"/>
</dbReference>
<dbReference type="GenomeRNAi" id="26097"/>
<dbReference type="Pharos" id="Q9Y3Y2">
    <property type="development level" value="Tbio"/>
</dbReference>
<dbReference type="PRO" id="PR:Q9Y3Y2"/>
<dbReference type="Proteomes" id="UP000005640">
    <property type="component" value="Chromosome 1"/>
</dbReference>
<dbReference type="RNAct" id="Q9Y3Y2">
    <property type="molecule type" value="protein"/>
</dbReference>
<dbReference type="Bgee" id="ENSG00000160679">
    <property type="expression patterns" value="Expressed in tendon of biceps brachii and 211 other cell types or tissues"/>
</dbReference>
<dbReference type="ExpressionAtlas" id="Q9Y3Y2">
    <property type="expression patterns" value="baseline and differential"/>
</dbReference>
<dbReference type="GO" id="GO:0016607">
    <property type="term" value="C:nuclear speck"/>
    <property type="evidence" value="ECO:0000314"/>
    <property type="project" value="HPA"/>
</dbReference>
<dbReference type="GO" id="GO:0005730">
    <property type="term" value="C:nucleolus"/>
    <property type="evidence" value="ECO:0007669"/>
    <property type="project" value="UniProtKB-SubCell"/>
</dbReference>
<dbReference type="GO" id="GO:0005654">
    <property type="term" value="C:nucleoplasm"/>
    <property type="evidence" value="ECO:0000304"/>
    <property type="project" value="Reactome"/>
</dbReference>
<dbReference type="GO" id="GO:0000346">
    <property type="term" value="C:transcription export complex"/>
    <property type="evidence" value="ECO:0000314"/>
    <property type="project" value="UniProtKB"/>
</dbReference>
<dbReference type="GO" id="GO:0008327">
    <property type="term" value="F:methyl-CpG binding"/>
    <property type="evidence" value="ECO:0000314"/>
    <property type="project" value="UniProtKB"/>
</dbReference>
<dbReference type="GO" id="GO:0003723">
    <property type="term" value="F:RNA binding"/>
    <property type="evidence" value="ECO:0007005"/>
    <property type="project" value="UniProtKB"/>
</dbReference>
<dbReference type="GO" id="GO:0006338">
    <property type="term" value="P:chromatin remodeling"/>
    <property type="evidence" value="ECO:0000315"/>
    <property type="project" value="UniProtKB"/>
</dbReference>
<dbReference type="GO" id="GO:0001701">
    <property type="term" value="P:in utero embryonic development"/>
    <property type="evidence" value="ECO:0007669"/>
    <property type="project" value="Ensembl"/>
</dbReference>
<dbReference type="GO" id="GO:0006406">
    <property type="term" value="P:mRNA export from nucleus"/>
    <property type="evidence" value="ECO:0000314"/>
    <property type="project" value="UniProtKB"/>
</dbReference>
<dbReference type="GO" id="GO:0032781">
    <property type="term" value="P:positive regulation of ATP-dependent activity"/>
    <property type="evidence" value="ECO:0000314"/>
    <property type="project" value="UniProtKB"/>
</dbReference>
<dbReference type="GO" id="GO:0051096">
    <property type="term" value="P:positive regulation of helicase activity"/>
    <property type="evidence" value="ECO:0000314"/>
    <property type="project" value="UniProtKB"/>
</dbReference>
<dbReference type="InterPro" id="IPR052656">
    <property type="entry name" value="CTOP_PRMT1"/>
</dbReference>
<dbReference type="InterPro" id="IPR025715">
    <property type="entry name" value="FoP_C"/>
</dbReference>
<dbReference type="PANTHER" id="PTHR48426">
    <property type="entry name" value="CHROMATIN TARGET OF PRMT1 PROTEIN"/>
    <property type="match status" value="1"/>
</dbReference>
<dbReference type="PANTHER" id="PTHR48426:SF1">
    <property type="entry name" value="CHROMATIN TARGET OF PRMT1 PROTEIN"/>
    <property type="match status" value="1"/>
</dbReference>
<dbReference type="Pfam" id="PF13865">
    <property type="entry name" value="FoP_duplication"/>
    <property type="match status" value="1"/>
</dbReference>
<dbReference type="SMART" id="SM01218">
    <property type="entry name" value="FoP_duplication"/>
    <property type="match status" value="1"/>
</dbReference>
<comment type="function">
    <text evidence="2 5 6 9">Plays an important role in the ligand-dependent activation of estrogen receptor target genes (PubMed:19858291). May play a role in the silencing of fetal globin genes (PubMed:20688955). Recruits the 5FMC complex to ZNF148, leading to desumoylation of ZNF148 and subsequent transactivation of ZNF148 target genes (By similarity). Plays an important role in the tumorigenicity of glioblastoma cells. Binds to 5-hydroxymethylcytosine (5hmC) and associates with the methylosome complex containing PRMT1, PRMT5, MEP50 and ERH. The CHTOP-methylosome complex associated with 5hmC is recruited to selective sites on the chromosome, where it methylates H4R3 and activates the transcription of genes involved in glioblastomagenesis (PubMed:25284789).</text>
</comment>
<comment type="function">
    <text evidence="7">Required for effective mRNA nuclear export and is a component of the TREX complex which is thought to couple mRNA transcription, processing and nuclear export, and specifically associates with spliced mRNA and not with unspliced pre-mRNA. TREX is recruited to spliced mRNAs by a transcription-independent mechanism, binds to mRNA upstream of the exon-junction complex (EJC) and is recruited in a splicing- and cap-dependent manner to a region near the 5' end of the mRNA where it functions in mRNA export to the cytoplasm via the TAP/NFX1 pathway. The TREX complex is essential for the export of Kaposi's sarcoma-associated herpesvirus (KSHV) intronless mRNAs and infectious virus production. Stimulates DDX39B ATPase and helicase activities. In cooperation with ALYREF/THOC4 enhances NXF1 RNA binding activity (PubMed:23299939).</text>
</comment>
<comment type="subunit">
    <text evidence="2 7 8 9">Interacts with PRMT1 and PRMT5 (PubMed:25284789). Interacts with the 5FMC complex; the interaction is methylation-dependent. Interacts with FYTTD1, SET and PRC1 complex members CBX4, RNF2 and PHC2; the interactions are methylation-independent. Interacts with ZNF148 (By similarity). Component of the transcription/export (TREX) complex at least composed of ALYREF/THOC4, DDX39B, SARNP/CIP29, CHTOP and the THO subcomplex; TREX seems to have dynamic structure involving ATP-dependent remodeling; in the complex interacts (methylated) with ALYREF/THOC4 and with DDX39B in a methylation-independent manner. Interacts (methylated) with NXF1; the interaction is mutually exclusive with the NXF1:THOC5 interaction (PubMed:23299939, PubMed:23826332). Interacts with WDR77 and ERH (PubMed:25284789).</text>
</comment>
<comment type="interaction">
    <interactant intactId="EBI-347794">
        <id>Q9Y3Y2</id>
    </interactant>
    <interactant intactId="EBI-347640">
        <id>Q86V81</id>
        <label>ALYREF</label>
    </interactant>
    <organismsDiffer>false</organismsDiffer>
    <experiments>8</experiments>
</comment>
<comment type="interaction">
    <interactant intactId="EBI-347794">
        <id>Q9Y3Y2</id>
    </interactant>
    <interactant intactId="EBI-348622">
        <id>Q13838</id>
        <label>DDX39B</label>
    </interactant>
    <organismsDiffer>false</organismsDiffer>
    <experiments>8</experiments>
</comment>
<comment type="interaction">
    <interactant intactId="EBI-347794">
        <id>Q9Y3Y2</id>
    </interactant>
    <interactant intactId="EBI-711389">
        <id>P84090</id>
        <label>ERH</label>
    </interactant>
    <organismsDiffer>false</organismsDiffer>
    <experiments>6</experiments>
</comment>
<comment type="interaction">
    <interactant intactId="EBI-347794">
        <id>Q9Y3Y2</id>
    </interactant>
    <interactant intactId="EBI-742808">
        <id>Q5VWX1</id>
        <label>KHDRBS2</label>
    </interactant>
    <organismsDiffer>false</organismsDiffer>
    <experiments>3</experiments>
</comment>
<comment type="interaction">
    <interactant intactId="EBI-347794">
        <id>Q9Y3Y2</id>
    </interactant>
    <interactant intactId="EBI-398874">
        <id>Q9UBU9</id>
        <label>NXF1</label>
    </interactant>
    <organismsDiffer>false</organismsDiffer>
    <experiments>9</experiments>
</comment>
<comment type="interaction">
    <interactant intactId="EBI-347794">
        <id>Q9Y3Y2</id>
    </interactant>
    <interactant intactId="EBI-78738">
        <id>Q99873</id>
        <label>PRMT1</label>
    </interactant>
    <organismsDiffer>false</organismsDiffer>
    <experiments>5</experiments>
</comment>
<comment type="interaction">
    <interactant intactId="EBI-347794">
        <id>Q9Y3Y2</id>
    </interactant>
    <interactant intactId="EBI-395421">
        <id>Q16637</id>
        <label>SMN2</label>
    </interactant>
    <organismsDiffer>false</organismsDiffer>
    <experiments>3</experiments>
</comment>
<comment type="interaction">
    <interactant intactId="EBI-347794">
        <id>Q9Y3Y2</id>
    </interactant>
    <interactant intactId="EBI-593303">
        <id>P78362</id>
        <label>SRPK2</label>
    </interactant>
    <organismsDiffer>false</organismsDiffer>
    <experiments>2</experiments>
</comment>
<comment type="interaction">
    <interactant intactId="EBI-11984237">
        <id>Q9Y3Y2-3</id>
    </interactant>
    <interactant intactId="EBI-1044593">
        <id>Q9NRW3</id>
        <label>APOBEC3C</label>
    </interactant>
    <organismsDiffer>false</organismsDiffer>
    <experiments>3</experiments>
</comment>
<comment type="interaction">
    <interactant intactId="EBI-11984237">
        <id>Q9Y3Y2-3</id>
    </interactant>
    <interactant intactId="EBI-348253">
        <id>O00148</id>
        <label>DDX39A</label>
    </interactant>
    <organismsDiffer>false</organismsDiffer>
    <experiments>3</experiments>
</comment>
<comment type="interaction">
    <interactant intactId="EBI-11984237">
        <id>Q9Y3Y2-3</id>
    </interactant>
    <interactant intactId="EBI-348622">
        <id>Q13838</id>
        <label>DDX39B</label>
    </interactant>
    <organismsDiffer>false</organismsDiffer>
    <experiments>5</experiments>
</comment>
<comment type="interaction">
    <interactant intactId="EBI-11984237">
        <id>Q9Y3Y2-3</id>
    </interactant>
    <interactant intactId="EBI-711389">
        <id>P84090</id>
        <label>ERH</label>
    </interactant>
    <organismsDiffer>false</organismsDiffer>
    <experiments>5</experiments>
</comment>
<comment type="interaction">
    <interactant intactId="EBI-11984237">
        <id>Q9Y3Y2-3</id>
    </interactant>
    <interactant intactId="EBI-742808">
        <id>Q5VWX1</id>
        <label>KHDRBS2</label>
    </interactant>
    <organismsDiffer>false</organismsDiffer>
    <experiments>3</experiments>
</comment>
<comment type="interaction">
    <interactant intactId="EBI-11984237">
        <id>Q9Y3Y2-3</id>
    </interactant>
    <interactant intactId="EBI-11018958">
        <id>Q6NSJ2-2</id>
        <label>PHLDB3</label>
    </interactant>
    <organismsDiffer>false</organismsDiffer>
    <experiments>3</experiments>
</comment>
<comment type="interaction">
    <interactant intactId="EBI-11984237">
        <id>Q9Y3Y2-3</id>
    </interactant>
    <interactant intactId="EBI-2949699">
        <id>P98179</id>
        <label>RBM3</label>
    </interactant>
    <organismsDiffer>false</organismsDiffer>
    <experiments>3</experiments>
</comment>
<comment type="interaction">
    <interactant intactId="EBI-11984237">
        <id>Q9Y3Y2-3</id>
    </interactant>
    <interactant intactId="EBI-395421">
        <id>Q16637</id>
        <label>SMN2</label>
    </interactant>
    <organismsDiffer>false</organismsDiffer>
    <experiments>3</experiments>
</comment>
<comment type="interaction">
    <interactant intactId="EBI-11984237">
        <id>Q9Y3Y2-3</id>
    </interactant>
    <interactant intactId="EBI-607085">
        <id>P09012</id>
        <label>SNRPA</label>
    </interactant>
    <organismsDiffer>false</organismsDiffer>
    <experiments>3</experiments>
</comment>
<comment type="subcellular location">
    <subcellularLocation>
        <location evidence="4">Nucleus</location>
    </subcellularLocation>
    <subcellularLocation>
        <location evidence="4">Nucleus</location>
        <location evidence="4">Nucleolus</location>
    </subcellularLocation>
    <subcellularLocation>
        <location evidence="8">Nucleus</location>
        <location evidence="8">Nucleoplasm</location>
    </subcellularLocation>
    <subcellularLocation>
        <location evidence="7 8">Nucleus speckle</location>
    </subcellularLocation>
    <text evidence="2 8">Mostly associated with facultative heterochromatin (By similarity). Localizes to regions surrounding nuclear speckles known as perispeckles in which TREX complex assembly seems to occur (PubMed:23826332).</text>
</comment>
<comment type="alternative products">
    <event type="alternative splicing"/>
    <isoform>
        <id>Q9Y3Y2-1</id>
        <name>1</name>
        <sequence type="displayed"/>
    </isoform>
    <isoform>
        <id>Q9Y3Y2-3</id>
        <name>2</name>
        <sequence type="described" ref="VSP_017277"/>
    </isoform>
    <isoform>
        <id>Q9Y3Y2-4</id>
        <name>3</name>
        <name>SRAG-5</name>
        <sequence type="described" ref="VSP_040496"/>
    </isoform>
</comment>
<comment type="tissue specificity">
    <text evidence="6 9">Expressed in an erythroid progenitor cell line derived from peripheral blood. Expressed in glioblastoma cells (PubMed:25284789).</text>
</comment>
<comment type="PTM">
    <text evidence="2 9">Asymmetrically methylated by PRMT1 (PubMed:25284789). Symmetrically methylated by PRMT5 (By similarity).</text>
</comment>
<comment type="sequence caution" evidence="11">
    <conflict type="erroneous initiation">
        <sequence resource="EMBL-CDS" id="AAH02733"/>
    </conflict>
    <text>Truncated N-terminus.</text>
</comment>
<comment type="sequence caution" evidence="11">
    <conflict type="erroneous initiation">
        <sequence resource="EMBL-CDS" id="AAH70027"/>
    </conflict>
    <text>Truncated N-terminus.</text>
</comment>
<comment type="sequence caution" evidence="11">
    <conflict type="frameshift">
        <sequence resource="EMBL-CDS" id="AAL55869"/>
    </conflict>
</comment>
<reference key="1">
    <citation type="submission" date="2000-05" db="EMBL/GenBank/DDBJ databases">
        <authorList>
            <person name="Xu X."/>
            <person name="Yang Y."/>
            <person name="Gao G."/>
            <person name="Xiao H."/>
            <person name="Chen Z."/>
            <person name="Han Z."/>
        </authorList>
    </citation>
    <scope>NUCLEOTIDE SEQUENCE [LARGE SCALE MRNA] (ISOFORM 1)</scope>
    <source>
        <tissue>Hypothalamus</tissue>
    </source>
</reference>
<reference key="2">
    <citation type="journal article" date="2004" name="Proc. Natl. Acad. Sci. U.S.A.">
        <title>Large-scale cDNA transfection screening for genes related to cancer development and progression.</title>
        <authorList>
            <person name="Wan D."/>
            <person name="Gong Y."/>
            <person name="Qin W."/>
            <person name="Zhang P."/>
            <person name="Li J."/>
            <person name="Wei L."/>
            <person name="Zhou X."/>
            <person name="Li H."/>
            <person name="Qiu X."/>
            <person name="Zhong F."/>
            <person name="He L."/>
            <person name="Yu J."/>
            <person name="Yao G."/>
            <person name="Jiang H."/>
            <person name="Qian L."/>
            <person name="Yu Y."/>
            <person name="Shu H."/>
            <person name="Chen X."/>
            <person name="Xu H."/>
            <person name="Guo M."/>
            <person name="Pan Z."/>
            <person name="Chen Y."/>
            <person name="Ge C."/>
            <person name="Yang S."/>
            <person name="Gu J."/>
        </authorList>
    </citation>
    <scope>NUCLEOTIDE SEQUENCE [LARGE SCALE MRNA] (ISOFORM 1)</scope>
</reference>
<reference key="3">
    <citation type="journal article" date="2006" name="Nature">
        <title>The DNA sequence and biological annotation of human chromosome 1.</title>
        <authorList>
            <person name="Gregory S.G."/>
            <person name="Barlow K.F."/>
            <person name="McLay K.E."/>
            <person name="Kaul R."/>
            <person name="Swarbreck D."/>
            <person name="Dunham A."/>
            <person name="Scott C.E."/>
            <person name="Howe K.L."/>
            <person name="Woodfine K."/>
            <person name="Spencer C.C.A."/>
            <person name="Jones M.C."/>
            <person name="Gillson C."/>
            <person name="Searle S."/>
            <person name="Zhou Y."/>
            <person name="Kokocinski F."/>
            <person name="McDonald L."/>
            <person name="Evans R."/>
            <person name="Phillips K."/>
            <person name="Atkinson A."/>
            <person name="Cooper R."/>
            <person name="Jones C."/>
            <person name="Hall R.E."/>
            <person name="Andrews T.D."/>
            <person name="Lloyd C."/>
            <person name="Ainscough R."/>
            <person name="Almeida J.P."/>
            <person name="Ambrose K.D."/>
            <person name="Anderson F."/>
            <person name="Andrew R.W."/>
            <person name="Ashwell R.I.S."/>
            <person name="Aubin K."/>
            <person name="Babbage A.K."/>
            <person name="Bagguley C.L."/>
            <person name="Bailey J."/>
            <person name="Beasley H."/>
            <person name="Bethel G."/>
            <person name="Bird C.P."/>
            <person name="Bray-Allen S."/>
            <person name="Brown J.Y."/>
            <person name="Brown A.J."/>
            <person name="Buckley D."/>
            <person name="Burton J."/>
            <person name="Bye J."/>
            <person name="Carder C."/>
            <person name="Chapman J.C."/>
            <person name="Clark S.Y."/>
            <person name="Clarke G."/>
            <person name="Clee C."/>
            <person name="Cobley V."/>
            <person name="Collier R.E."/>
            <person name="Corby N."/>
            <person name="Coville G.J."/>
            <person name="Davies J."/>
            <person name="Deadman R."/>
            <person name="Dunn M."/>
            <person name="Earthrowl M."/>
            <person name="Ellington A.G."/>
            <person name="Errington H."/>
            <person name="Frankish A."/>
            <person name="Frankland J."/>
            <person name="French L."/>
            <person name="Garner P."/>
            <person name="Garnett J."/>
            <person name="Gay L."/>
            <person name="Ghori M.R.J."/>
            <person name="Gibson R."/>
            <person name="Gilby L.M."/>
            <person name="Gillett W."/>
            <person name="Glithero R.J."/>
            <person name="Grafham D.V."/>
            <person name="Griffiths C."/>
            <person name="Griffiths-Jones S."/>
            <person name="Grocock R."/>
            <person name="Hammond S."/>
            <person name="Harrison E.S.I."/>
            <person name="Hart E."/>
            <person name="Haugen E."/>
            <person name="Heath P.D."/>
            <person name="Holmes S."/>
            <person name="Holt K."/>
            <person name="Howden P.J."/>
            <person name="Hunt A.R."/>
            <person name="Hunt S.E."/>
            <person name="Hunter G."/>
            <person name="Isherwood J."/>
            <person name="James R."/>
            <person name="Johnson C."/>
            <person name="Johnson D."/>
            <person name="Joy A."/>
            <person name="Kay M."/>
            <person name="Kershaw J.K."/>
            <person name="Kibukawa M."/>
            <person name="Kimberley A.M."/>
            <person name="King A."/>
            <person name="Knights A.J."/>
            <person name="Lad H."/>
            <person name="Laird G."/>
            <person name="Lawlor S."/>
            <person name="Leongamornlert D.A."/>
            <person name="Lloyd D.M."/>
            <person name="Loveland J."/>
            <person name="Lovell J."/>
            <person name="Lush M.J."/>
            <person name="Lyne R."/>
            <person name="Martin S."/>
            <person name="Mashreghi-Mohammadi M."/>
            <person name="Matthews L."/>
            <person name="Matthews N.S.W."/>
            <person name="McLaren S."/>
            <person name="Milne S."/>
            <person name="Mistry S."/>
            <person name="Moore M.J.F."/>
            <person name="Nickerson T."/>
            <person name="O'Dell C.N."/>
            <person name="Oliver K."/>
            <person name="Palmeiri A."/>
            <person name="Palmer S.A."/>
            <person name="Parker A."/>
            <person name="Patel D."/>
            <person name="Pearce A.V."/>
            <person name="Peck A.I."/>
            <person name="Pelan S."/>
            <person name="Phelps K."/>
            <person name="Phillimore B.J."/>
            <person name="Plumb R."/>
            <person name="Rajan J."/>
            <person name="Raymond C."/>
            <person name="Rouse G."/>
            <person name="Saenphimmachak C."/>
            <person name="Sehra H.K."/>
            <person name="Sheridan E."/>
            <person name="Shownkeen R."/>
            <person name="Sims S."/>
            <person name="Skuce C.D."/>
            <person name="Smith M."/>
            <person name="Steward C."/>
            <person name="Subramanian S."/>
            <person name="Sycamore N."/>
            <person name="Tracey A."/>
            <person name="Tromans A."/>
            <person name="Van Helmond Z."/>
            <person name="Wall M."/>
            <person name="Wallis J.M."/>
            <person name="White S."/>
            <person name="Whitehead S.L."/>
            <person name="Wilkinson J.E."/>
            <person name="Willey D.L."/>
            <person name="Williams H."/>
            <person name="Wilming L."/>
            <person name="Wray P.W."/>
            <person name="Wu Z."/>
            <person name="Coulson A."/>
            <person name="Vaudin M."/>
            <person name="Sulston J.E."/>
            <person name="Durbin R.M."/>
            <person name="Hubbard T."/>
            <person name="Wooster R."/>
            <person name="Dunham I."/>
            <person name="Carter N.P."/>
            <person name="McVean G."/>
            <person name="Ross M.T."/>
            <person name="Harrow J."/>
            <person name="Olson M.V."/>
            <person name="Beck S."/>
            <person name="Rogers J."/>
            <person name="Bentley D.R."/>
        </authorList>
    </citation>
    <scope>NUCLEOTIDE SEQUENCE [LARGE SCALE GENOMIC DNA]</scope>
</reference>
<reference key="4">
    <citation type="submission" date="2005-09" db="EMBL/GenBank/DDBJ databases">
        <authorList>
            <person name="Mural R.J."/>
            <person name="Istrail S."/>
            <person name="Sutton G.G."/>
            <person name="Florea L."/>
            <person name="Halpern A.L."/>
            <person name="Mobarry C.M."/>
            <person name="Lippert R."/>
            <person name="Walenz B."/>
            <person name="Shatkay H."/>
            <person name="Dew I."/>
            <person name="Miller J.R."/>
            <person name="Flanigan M.J."/>
            <person name="Edwards N.J."/>
            <person name="Bolanos R."/>
            <person name="Fasulo D."/>
            <person name="Halldorsson B.V."/>
            <person name="Hannenhalli S."/>
            <person name="Turner R."/>
            <person name="Yooseph S."/>
            <person name="Lu F."/>
            <person name="Nusskern D.R."/>
            <person name="Shue B.C."/>
            <person name="Zheng X.H."/>
            <person name="Zhong F."/>
            <person name="Delcher A.L."/>
            <person name="Huson D.H."/>
            <person name="Kravitz S.A."/>
            <person name="Mouchard L."/>
            <person name="Reinert K."/>
            <person name="Remington K.A."/>
            <person name="Clark A.G."/>
            <person name="Waterman M.S."/>
            <person name="Eichler E.E."/>
            <person name="Adams M.D."/>
            <person name="Hunkapiller M.W."/>
            <person name="Myers E.W."/>
            <person name="Venter J.C."/>
        </authorList>
    </citation>
    <scope>NUCLEOTIDE SEQUENCE [LARGE SCALE GENOMIC DNA]</scope>
</reference>
<reference key="5">
    <citation type="journal article" date="2004" name="Genome Res.">
        <title>The status, quality, and expansion of the NIH full-length cDNA project: the Mammalian Gene Collection (MGC).</title>
        <authorList>
            <consortium name="The MGC Project Team"/>
        </authorList>
    </citation>
    <scope>NUCLEOTIDE SEQUENCE [LARGE SCALE MRNA] (ISOFORM 2)</scope>
    <scope>NUCLEOTIDE SEQUENCE [LARGE SCALE MRNA] OF 55-248 (ISOFORM 1)</scope>
    <source>
        <tissue>Eye</tissue>
        <tissue>Liver</tissue>
        <tissue>Placenta</tissue>
        <tissue>Uterus</tissue>
    </source>
</reference>
<reference key="6">
    <citation type="journal article" date="2007" name="BMC Genomics">
        <title>The full-ORF clone resource of the German cDNA consortium.</title>
        <authorList>
            <person name="Bechtel S."/>
            <person name="Rosenfelder H."/>
            <person name="Duda A."/>
            <person name="Schmidt C.P."/>
            <person name="Ernst U."/>
            <person name="Wellenreuther R."/>
            <person name="Mehrle A."/>
            <person name="Schuster C."/>
            <person name="Bahr A."/>
            <person name="Bloecker H."/>
            <person name="Heubner D."/>
            <person name="Hoerlein A."/>
            <person name="Michel G."/>
            <person name="Wedler H."/>
            <person name="Koehrer K."/>
            <person name="Ottenwaelder B."/>
            <person name="Poustka A."/>
            <person name="Wiemann S."/>
            <person name="Schupp I."/>
        </authorList>
    </citation>
    <scope>NUCLEOTIDE SEQUENCE [LARGE SCALE MRNA] OF 23-248 (ISOFORM 1)</scope>
    <source>
        <tissue>Fetal brain</tissue>
        <tissue>Lymph node</tissue>
    </source>
</reference>
<reference key="7">
    <citation type="journal article" date="2006" name="Cell">
        <title>Global, in vivo, and site-specific phosphorylation dynamics in signaling networks.</title>
        <authorList>
            <person name="Olsen J.V."/>
            <person name="Blagoev B."/>
            <person name="Gnad F."/>
            <person name="Macek B."/>
            <person name="Kumar C."/>
            <person name="Mortensen P."/>
            <person name="Mann M."/>
        </authorList>
    </citation>
    <scope>PHOSPHORYLATION [LARGE SCALE ANALYSIS] AT THR-242</scope>
    <scope>IDENTIFICATION BY MASS SPECTROMETRY [LARGE SCALE ANALYSIS]</scope>
    <source>
        <tissue>Cervix carcinoma</tissue>
    </source>
</reference>
<reference key="8">
    <citation type="journal article" date="2009" name="J. Biol. Chem.">
        <title>Identification of the small protein rich in arginine and glycine (SRAG): a newly identified nucleolar protein that can regulate cell proliferation.</title>
        <authorList>
            <person name="Zullo A.J."/>
            <person name="Michaud M."/>
            <person name="Zhang W."/>
            <person name="Grusby M.J."/>
        </authorList>
    </citation>
    <scope>ALTERNATIVE SPLICING</scope>
    <scope>SUBCELLULAR LOCATION</scope>
    <scope>RNA-BINDING</scope>
</reference>
<reference key="9">
    <citation type="journal article" date="2010" name="Blood">
        <title>Fetal globin expression is regulated by Friend of Prmt1.</title>
        <authorList>
            <person name="van Dijk T.B."/>
            <person name="Gillemans N."/>
            <person name="Pourfarzad F."/>
            <person name="van Lom K."/>
            <person name="von Lindern M."/>
            <person name="Grosveld F."/>
            <person name="Philipsen S."/>
        </authorList>
    </citation>
    <scope>FUNCTION</scope>
    <scope>TISSUE SPECIFICITY</scope>
</reference>
<reference key="10">
    <citation type="journal article" date="2010" name="Mol. Cell. Biol.">
        <title>Friend of Prmt1, a novel chromatin target of protein arginine methyltransferases.</title>
        <authorList>
            <person name="van Dijk T.B."/>
            <person name="Gillemans N."/>
            <person name="Stein C."/>
            <person name="Fanis P."/>
            <person name="Demmers J."/>
            <person name="van de Corput M."/>
            <person name="Essers J."/>
            <person name="Grosveld F."/>
            <person name="Bauer U.M."/>
            <person name="Philipsen S."/>
        </authorList>
    </citation>
    <scope>FUNCTION</scope>
</reference>
<reference key="11">
    <citation type="journal article" date="2010" name="Sci. Signal.">
        <title>Quantitative phosphoproteomics reveals widespread full phosphorylation site occupancy during mitosis.</title>
        <authorList>
            <person name="Olsen J.V."/>
            <person name="Vermeulen M."/>
            <person name="Santamaria A."/>
            <person name="Kumar C."/>
            <person name="Miller M.L."/>
            <person name="Jensen L.J."/>
            <person name="Gnad F."/>
            <person name="Cox J."/>
            <person name="Jensen T.S."/>
            <person name="Nigg E.A."/>
            <person name="Brunak S."/>
            <person name="Mann M."/>
        </authorList>
    </citation>
    <scope>PHOSPHORYLATION [LARGE SCALE ANALYSIS] AT THR-33 AND THR-242</scope>
    <scope>IDENTIFICATION BY MASS SPECTROMETRY [LARGE SCALE ANALYSIS]</scope>
    <source>
        <tissue>Cervix carcinoma</tissue>
    </source>
</reference>
<reference key="12">
    <citation type="journal article" date="2011" name="BMC Syst. Biol.">
        <title>Initial characterization of the human central proteome.</title>
        <authorList>
            <person name="Burkard T.R."/>
            <person name="Planyavsky M."/>
            <person name="Kaupe I."/>
            <person name="Breitwieser F.P."/>
            <person name="Buerckstuemmer T."/>
            <person name="Bennett K.L."/>
            <person name="Superti-Furga G."/>
            <person name="Colinge J."/>
        </authorList>
    </citation>
    <scope>IDENTIFICATION BY MASS SPECTROMETRY [LARGE SCALE ANALYSIS]</scope>
</reference>
<reference key="13">
    <citation type="journal article" date="2012" name="Proc. Natl. Acad. Sci. U.S.A.">
        <title>N-terminal acetylome analyses and functional insights of the N-terminal acetyltransferase NatB.</title>
        <authorList>
            <person name="Van Damme P."/>
            <person name="Lasa M."/>
            <person name="Polevoda B."/>
            <person name="Gazquez C."/>
            <person name="Elosegui-Artola A."/>
            <person name="Kim D.S."/>
            <person name="De Juan-Pardo E."/>
            <person name="Demeyer K."/>
            <person name="Hole K."/>
            <person name="Larrea E."/>
            <person name="Timmerman E."/>
            <person name="Prieto J."/>
            <person name="Arnesen T."/>
            <person name="Sherman F."/>
            <person name="Gevaert K."/>
            <person name="Aldabe R."/>
        </authorList>
    </citation>
    <scope>ACETYLATION [LARGE SCALE ANALYSIS] AT ALA-2</scope>
    <scope>CLEAVAGE OF INITIATOR METHIONINE [LARGE SCALE ANALYSIS]</scope>
    <scope>IDENTIFICATION BY MASS SPECTROMETRY [LARGE SCALE ANALYSIS]</scope>
</reference>
<reference key="14">
    <citation type="journal article" date="2013" name="EMBO J.">
        <title>Chtop is a component of the dynamic TREX mRNA export complex.</title>
        <authorList>
            <person name="Chang C.T."/>
            <person name="Hautbergue G.M."/>
            <person name="Walsh M.J."/>
            <person name="Viphakone N."/>
            <person name="van Dijk T.B."/>
            <person name="Philipsen S."/>
            <person name="Wilson S.A."/>
        </authorList>
    </citation>
    <scope>FUNCTION</scope>
    <scope>IDENTIFICATION IN THE TREX COMPLEX</scope>
    <scope>METHYLATION</scope>
    <scope>SUBCELLULAR LOCATION</scope>
    <scope>INTERACTION WITH NXF1; DDX39B AND ALYREF</scope>
</reference>
<reference key="15">
    <citation type="journal article" date="2013" name="J. Proteome Res.">
        <title>Toward a comprehensive characterization of a human cancer cell phosphoproteome.</title>
        <authorList>
            <person name="Zhou H."/>
            <person name="Di Palma S."/>
            <person name="Preisinger C."/>
            <person name="Peng M."/>
            <person name="Polat A.N."/>
            <person name="Heck A.J."/>
            <person name="Mohammed S."/>
        </authorList>
    </citation>
    <scope>PHOSPHORYLATION [LARGE SCALE ANALYSIS] AT THR-33; SER-40; SER-49 AND SER-64</scope>
    <scope>IDENTIFICATION BY MASS SPECTROMETRY [LARGE SCALE ANALYSIS]</scope>
    <source>
        <tissue>Erythroleukemia</tissue>
    </source>
</reference>
<reference key="16">
    <citation type="journal article" date="2013" name="PLoS ONE">
        <title>Mapping interactions between mRNA export factors in living cells.</title>
        <authorList>
            <person name="Teng I.F."/>
            <person name="Wilson S.A."/>
        </authorList>
    </citation>
    <scope>SUBCELLULAR LOCATION</scope>
    <scope>INTERACTION WITH ALYREF AND NXF1</scope>
</reference>
<reference key="17">
    <citation type="journal article" date="2014" name="Cell Rep.">
        <title>5-Hydroxymethylcytosine plays a critical role in glioblastomagenesis by recruiting the CHTOP-methylosome complex.</title>
        <authorList>
            <person name="Takai H."/>
            <person name="Masuda K."/>
            <person name="Sato T."/>
            <person name="Sakaguchi Y."/>
            <person name="Suzuki T."/>
            <person name="Suzuki T."/>
            <person name="Koyama-Nasu R."/>
            <person name="Nasu-Nishimura Y."/>
            <person name="Katou Y."/>
            <person name="Ogawa H."/>
            <person name="Morishita Y."/>
            <person name="Kozuka-Hata H."/>
            <person name="Oyama M."/>
            <person name="Todo T."/>
            <person name="Ino Y."/>
            <person name="Mukasa A."/>
            <person name="Saito N."/>
            <person name="Toyoshima C."/>
            <person name="Shirahige K."/>
            <person name="Akiyama T."/>
        </authorList>
    </citation>
    <scope>FUNCTION</scope>
    <scope>INTERACTION WITH PRMT1; PRMT5; WDR77 AND ERH</scope>
    <scope>METHYLATION</scope>
    <scope>MUTAGENESIS OF ARG-195; ARG-197; ARG-199; ARG-201 AND ARG-203</scope>
</reference>
<reference key="18">
    <citation type="journal article" date="2017" name="Nat. Struct. Mol. Biol.">
        <title>Site-specific mapping of the human SUMO proteome reveals co-modification with phosphorylation.</title>
        <authorList>
            <person name="Hendriks I.A."/>
            <person name="Lyon D."/>
            <person name="Young C."/>
            <person name="Jensen L.J."/>
            <person name="Vertegaal A.C."/>
            <person name="Nielsen M.L."/>
        </authorList>
    </citation>
    <scope>SUMOYLATION [LARGE SCALE ANALYSIS] AT LYS-70</scope>
    <scope>IDENTIFICATION BY MASS SPECTROMETRY [LARGE SCALE ANALYSIS]</scope>
</reference>
<accession>Q9Y3Y2</accession>
<accession>D3DV55</accession>
<accession>Q0VAQ8</accession>
<accession>Q2VPI9</accession>
<accession>Q5T7Y8</accession>
<accession>Q5T7Y9</accession>
<accession>Q5T7Z0</accession>
<accession>Q6NSM4</accession>
<accession>Q6PB28</accession>
<accession>Q8WYT9</accession>
<accession>Q9BUC5</accession>
<accession>Q9H034</accession>
<accession>Q9H2L0</accession>